<protein>
    <recommendedName>
        <fullName evidence="1">Small ribosomal subunit protein uS2</fullName>
    </recommendedName>
    <alternativeName>
        <fullName evidence="2">30S ribosomal protein S2</fullName>
    </alternativeName>
</protein>
<proteinExistence type="inferred from homology"/>
<keyword id="KW-1185">Reference proteome</keyword>
<keyword id="KW-0687">Ribonucleoprotein</keyword>
<keyword id="KW-0689">Ribosomal protein</keyword>
<gene>
    <name evidence="1" type="primary">rpsB</name>
    <name type="ordered locus">RC1_1208</name>
</gene>
<comment type="similarity">
    <text evidence="1">Belongs to the universal ribosomal protein uS2 family.</text>
</comment>
<feature type="chain" id="PRO_1000115048" description="Small ribosomal subunit protein uS2">
    <location>
        <begin position="1"/>
        <end position="261"/>
    </location>
</feature>
<reference key="1">
    <citation type="submission" date="2007-03" db="EMBL/GenBank/DDBJ databases">
        <title>Genome sequence of Rhodospirillum centenum.</title>
        <authorList>
            <person name="Touchman J.W."/>
            <person name="Bauer C."/>
            <person name="Blankenship R.E."/>
        </authorList>
    </citation>
    <scope>NUCLEOTIDE SEQUENCE [LARGE SCALE GENOMIC DNA]</scope>
    <source>
        <strain>ATCC 51521 / SW</strain>
    </source>
</reference>
<sequence>MAIPTFTMRQLLEAGVHFGHHTRRWNPKMAPYLFGVRNGVHIIDLEQSVPMMYRAMQAVRDVVAGGGRVLFVGTKRAAQEKVAESAKRCGQYYVNHRWLGGMLTNWKTISQSIRRLKEMDEQLAVGEQSGRTKKELLNMTREREKLERALGGIRDMGGLPDLLFIIDTNKESLAIQEANKLGIPVVAVVDSNSDPDGVTFPVPGNDDALRAIDTYCELIAGAVLDGLQAEMSAAGIDLGAAEEAPEEVLPAEGAEQAPAQA</sequence>
<evidence type="ECO:0000255" key="1">
    <source>
        <dbReference type="HAMAP-Rule" id="MF_00291"/>
    </source>
</evidence>
<evidence type="ECO:0000305" key="2"/>
<dbReference type="EMBL" id="CP000613">
    <property type="protein sequence ID" value="ACI98622.1"/>
    <property type="molecule type" value="Genomic_DNA"/>
</dbReference>
<dbReference type="RefSeq" id="WP_012566410.1">
    <property type="nucleotide sequence ID" value="NC_011420.2"/>
</dbReference>
<dbReference type="SMR" id="B6ISV1"/>
<dbReference type="STRING" id="414684.RC1_1208"/>
<dbReference type="KEGG" id="rce:RC1_1208"/>
<dbReference type="eggNOG" id="COG0052">
    <property type="taxonomic scope" value="Bacteria"/>
</dbReference>
<dbReference type="HOGENOM" id="CLU_040318_2_1_5"/>
<dbReference type="OrthoDB" id="9808036at2"/>
<dbReference type="Proteomes" id="UP000001591">
    <property type="component" value="Chromosome"/>
</dbReference>
<dbReference type="GO" id="GO:0022627">
    <property type="term" value="C:cytosolic small ribosomal subunit"/>
    <property type="evidence" value="ECO:0007669"/>
    <property type="project" value="TreeGrafter"/>
</dbReference>
<dbReference type="GO" id="GO:0003735">
    <property type="term" value="F:structural constituent of ribosome"/>
    <property type="evidence" value="ECO:0007669"/>
    <property type="project" value="InterPro"/>
</dbReference>
<dbReference type="GO" id="GO:0006412">
    <property type="term" value="P:translation"/>
    <property type="evidence" value="ECO:0007669"/>
    <property type="project" value="UniProtKB-UniRule"/>
</dbReference>
<dbReference type="CDD" id="cd01425">
    <property type="entry name" value="RPS2"/>
    <property type="match status" value="1"/>
</dbReference>
<dbReference type="FunFam" id="1.10.287.610:FF:000001">
    <property type="entry name" value="30S ribosomal protein S2"/>
    <property type="match status" value="1"/>
</dbReference>
<dbReference type="Gene3D" id="3.40.50.10490">
    <property type="entry name" value="Glucose-6-phosphate isomerase like protein, domain 1"/>
    <property type="match status" value="1"/>
</dbReference>
<dbReference type="Gene3D" id="1.10.287.610">
    <property type="entry name" value="Helix hairpin bin"/>
    <property type="match status" value="1"/>
</dbReference>
<dbReference type="HAMAP" id="MF_00291_B">
    <property type="entry name" value="Ribosomal_uS2_B"/>
    <property type="match status" value="1"/>
</dbReference>
<dbReference type="InterPro" id="IPR001865">
    <property type="entry name" value="Ribosomal_uS2"/>
</dbReference>
<dbReference type="InterPro" id="IPR005706">
    <property type="entry name" value="Ribosomal_uS2_bac/mit/plastid"/>
</dbReference>
<dbReference type="InterPro" id="IPR018130">
    <property type="entry name" value="Ribosomal_uS2_CS"/>
</dbReference>
<dbReference type="InterPro" id="IPR023591">
    <property type="entry name" value="Ribosomal_uS2_flav_dom_sf"/>
</dbReference>
<dbReference type="NCBIfam" id="TIGR01011">
    <property type="entry name" value="rpsB_bact"/>
    <property type="match status" value="1"/>
</dbReference>
<dbReference type="PANTHER" id="PTHR12534">
    <property type="entry name" value="30S RIBOSOMAL PROTEIN S2 PROKARYOTIC AND ORGANELLAR"/>
    <property type="match status" value="1"/>
</dbReference>
<dbReference type="PANTHER" id="PTHR12534:SF0">
    <property type="entry name" value="SMALL RIBOSOMAL SUBUNIT PROTEIN US2M"/>
    <property type="match status" value="1"/>
</dbReference>
<dbReference type="Pfam" id="PF00318">
    <property type="entry name" value="Ribosomal_S2"/>
    <property type="match status" value="1"/>
</dbReference>
<dbReference type="PRINTS" id="PR00395">
    <property type="entry name" value="RIBOSOMALS2"/>
</dbReference>
<dbReference type="SUPFAM" id="SSF52313">
    <property type="entry name" value="Ribosomal protein S2"/>
    <property type="match status" value="1"/>
</dbReference>
<dbReference type="PROSITE" id="PS00962">
    <property type="entry name" value="RIBOSOMAL_S2_1"/>
    <property type="match status" value="1"/>
</dbReference>
<dbReference type="PROSITE" id="PS00963">
    <property type="entry name" value="RIBOSOMAL_S2_2"/>
    <property type="match status" value="1"/>
</dbReference>
<organism>
    <name type="scientific">Rhodospirillum centenum (strain ATCC 51521 / SW)</name>
    <dbReference type="NCBI Taxonomy" id="414684"/>
    <lineage>
        <taxon>Bacteria</taxon>
        <taxon>Pseudomonadati</taxon>
        <taxon>Pseudomonadota</taxon>
        <taxon>Alphaproteobacteria</taxon>
        <taxon>Rhodospirillales</taxon>
        <taxon>Rhodospirillaceae</taxon>
        <taxon>Rhodospirillum</taxon>
    </lineage>
</organism>
<name>RS2_RHOCS</name>
<accession>B6ISV1</accession>